<gene>
    <name evidence="1" type="primary">nudI</name>
    <name type="ordered locus">E2348C_2395</name>
</gene>
<evidence type="ECO:0000255" key="1">
    <source>
        <dbReference type="HAMAP-Rule" id="MF_01846"/>
    </source>
</evidence>
<protein>
    <recommendedName>
        <fullName evidence="1">Nucleoside triphosphatase NudI</fullName>
        <ecNumber evidence="1">3.6.1.9</ecNumber>
    </recommendedName>
    <alternativeName>
        <fullName evidence="1">Nucleotide diphosphatase NudI</fullName>
    </alternativeName>
    <alternativeName>
        <fullName evidence="1">Pyrimidine deoxynucleoside triphosphate diphosphatase</fullName>
    </alternativeName>
    <alternativeName>
        <fullName evidence="1">dCTP diphosphatase</fullName>
        <ecNumber evidence="1">3.6.1.12</ecNumber>
    </alternativeName>
    <alternativeName>
        <fullName evidence="1">dTTP diphosphatase</fullName>
        <ecNumber evidence="1">3.6.1.-</ecNumber>
    </alternativeName>
    <alternativeName>
        <fullName evidence="1">dUTP diphosphatase</fullName>
        <ecNumber evidence="1">3.6.1.23</ecNumber>
    </alternativeName>
</protein>
<sequence>MRQRTIVCPLIQNDGAYLLCKMADDRGVFPGQWALSGGGVEPGERIEEALRREIREELGEQLLLTEITPWTFSDDIRTKTYADGRKEEIYMIYLIFDCVSANREVKINEEFQDYAWVKPEDLVHYDLNVATRKTLRLKGLL</sequence>
<dbReference type="EC" id="3.6.1.9" evidence="1"/>
<dbReference type="EC" id="3.6.1.12" evidence="1"/>
<dbReference type="EC" id="3.6.1.-" evidence="1"/>
<dbReference type="EC" id="3.6.1.23" evidence="1"/>
<dbReference type="EMBL" id="FM180568">
    <property type="protein sequence ID" value="CAS09943.1"/>
    <property type="molecule type" value="Genomic_DNA"/>
</dbReference>
<dbReference type="RefSeq" id="WP_001249884.1">
    <property type="nucleotide sequence ID" value="NC_011601.1"/>
</dbReference>
<dbReference type="SMR" id="B7UFR3"/>
<dbReference type="GeneID" id="75172382"/>
<dbReference type="KEGG" id="ecg:E2348C_2395"/>
<dbReference type="HOGENOM" id="CLU_037162_31_0_6"/>
<dbReference type="Proteomes" id="UP000008205">
    <property type="component" value="Chromosome"/>
</dbReference>
<dbReference type="GO" id="GO:0047840">
    <property type="term" value="F:dCTP diphosphatase activity"/>
    <property type="evidence" value="ECO:0007669"/>
    <property type="project" value="UniProtKB-EC"/>
</dbReference>
<dbReference type="GO" id="GO:0036218">
    <property type="term" value="F:dTTP diphosphatase activity"/>
    <property type="evidence" value="ECO:0007669"/>
    <property type="project" value="RHEA"/>
</dbReference>
<dbReference type="GO" id="GO:0004170">
    <property type="term" value="F:dUTP diphosphatase activity"/>
    <property type="evidence" value="ECO:0007669"/>
    <property type="project" value="UniProtKB-EC"/>
</dbReference>
<dbReference type="GO" id="GO:0000287">
    <property type="term" value="F:magnesium ion binding"/>
    <property type="evidence" value="ECO:0007669"/>
    <property type="project" value="UniProtKB-UniRule"/>
</dbReference>
<dbReference type="FunFam" id="3.90.79.10:FF:000039">
    <property type="entry name" value="Nucleoside triphosphatase NudI"/>
    <property type="match status" value="1"/>
</dbReference>
<dbReference type="Gene3D" id="3.90.79.10">
    <property type="entry name" value="Nucleoside Triphosphate Pyrophosphohydrolase"/>
    <property type="match status" value="1"/>
</dbReference>
<dbReference type="HAMAP" id="MF_01846">
    <property type="entry name" value="Nudix_NudI"/>
    <property type="match status" value="1"/>
</dbReference>
<dbReference type="InterPro" id="IPR023781">
    <property type="entry name" value="Nucleoside_triphosphatase_NudI"/>
</dbReference>
<dbReference type="InterPro" id="IPR020476">
    <property type="entry name" value="Nudix_hydrolase"/>
</dbReference>
<dbReference type="InterPro" id="IPR015797">
    <property type="entry name" value="NUDIX_hydrolase-like_dom_sf"/>
</dbReference>
<dbReference type="InterPro" id="IPR020084">
    <property type="entry name" value="NUDIX_hydrolase_CS"/>
</dbReference>
<dbReference type="InterPro" id="IPR000086">
    <property type="entry name" value="NUDIX_hydrolase_dom"/>
</dbReference>
<dbReference type="NCBIfam" id="NF012016">
    <property type="entry name" value="PRK15472.1"/>
    <property type="match status" value="1"/>
</dbReference>
<dbReference type="PANTHER" id="PTHR43046">
    <property type="entry name" value="GDP-MANNOSE MANNOSYL HYDROLASE"/>
    <property type="match status" value="1"/>
</dbReference>
<dbReference type="PANTHER" id="PTHR43046:SF14">
    <property type="entry name" value="MUTT_NUDIX FAMILY PROTEIN"/>
    <property type="match status" value="1"/>
</dbReference>
<dbReference type="Pfam" id="PF00293">
    <property type="entry name" value="NUDIX"/>
    <property type="match status" value="1"/>
</dbReference>
<dbReference type="PRINTS" id="PR00502">
    <property type="entry name" value="NUDIXFAMILY"/>
</dbReference>
<dbReference type="SUPFAM" id="SSF55811">
    <property type="entry name" value="Nudix"/>
    <property type="match status" value="1"/>
</dbReference>
<dbReference type="PROSITE" id="PS51462">
    <property type="entry name" value="NUDIX"/>
    <property type="match status" value="1"/>
</dbReference>
<dbReference type="PROSITE" id="PS00893">
    <property type="entry name" value="NUDIX_BOX"/>
    <property type="match status" value="1"/>
</dbReference>
<comment type="function">
    <text evidence="1">Catalyzes the hydrolysis of nucleoside triphosphates, with a preference for pyrimidine deoxynucleoside triphosphates (dUTP, dTTP and dCTP).</text>
</comment>
<comment type="catalytic activity">
    <reaction evidence="1">
        <text>a ribonucleoside 5'-triphosphate + H2O = a ribonucleoside 5'-phosphate + diphosphate + H(+)</text>
        <dbReference type="Rhea" id="RHEA:23996"/>
        <dbReference type="ChEBI" id="CHEBI:15377"/>
        <dbReference type="ChEBI" id="CHEBI:15378"/>
        <dbReference type="ChEBI" id="CHEBI:33019"/>
        <dbReference type="ChEBI" id="CHEBI:58043"/>
        <dbReference type="ChEBI" id="CHEBI:61557"/>
        <dbReference type="EC" id="3.6.1.9"/>
    </reaction>
</comment>
<comment type="catalytic activity">
    <reaction evidence="1">
        <text>a 2'-deoxyribonucleoside 5'-triphosphate + H2O = a 2'-deoxyribonucleoside 5'-phosphate + diphosphate + H(+)</text>
        <dbReference type="Rhea" id="RHEA:44644"/>
        <dbReference type="ChEBI" id="CHEBI:15377"/>
        <dbReference type="ChEBI" id="CHEBI:15378"/>
        <dbReference type="ChEBI" id="CHEBI:33019"/>
        <dbReference type="ChEBI" id="CHEBI:61560"/>
        <dbReference type="ChEBI" id="CHEBI:65317"/>
        <dbReference type="EC" id="3.6.1.9"/>
    </reaction>
</comment>
<comment type="catalytic activity">
    <reaction evidence="1">
        <text>dUTP + H2O = dUMP + diphosphate + H(+)</text>
        <dbReference type="Rhea" id="RHEA:10248"/>
        <dbReference type="ChEBI" id="CHEBI:15377"/>
        <dbReference type="ChEBI" id="CHEBI:15378"/>
        <dbReference type="ChEBI" id="CHEBI:33019"/>
        <dbReference type="ChEBI" id="CHEBI:61555"/>
        <dbReference type="ChEBI" id="CHEBI:246422"/>
        <dbReference type="EC" id="3.6.1.9"/>
    </reaction>
</comment>
<comment type="catalytic activity">
    <reaction evidence="1">
        <text>dUTP + H2O = dUMP + diphosphate + H(+)</text>
        <dbReference type="Rhea" id="RHEA:10248"/>
        <dbReference type="ChEBI" id="CHEBI:15377"/>
        <dbReference type="ChEBI" id="CHEBI:15378"/>
        <dbReference type="ChEBI" id="CHEBI:33019"/>
        <dbReference type="ChEBI" id="CHEBI:61555"/>
        <dbReference type="ChEBI" id="CHEBI:246422"/>
        <dbReference type="EC" id="3.6.1.23"/>
    </reaction>
</comment>
<comment type="catalytic activity">
    <reaction evidence="1">
        <text>dTTP + H2O = dTMP + diphosphate + H(+)</text>
        <dbReference type="Rhea" id="RHEA:28534"/>
        <dbReference type="ChEBI" id="CHEBI:15377"/>
        <dbReference type="ChEBI" id="CHEBI:15378"/>
        <dbReference type="ChEBI" id="CHEBI:33019"/>
        <dbReference type="ChEBI" id="CHEBI:37568"/>
        <dbReference type="ChEBI" id="CHEBI:63528"/>
        <dbReference type="EC" id="3.6.1.9"/>
    </reaction>
</comment>
<comment type="catalytic activity">
    <reaction evidence="1">
        <text>dCTP + H2O = dCMP + diphosphate + H(+)</text>
        <dbReference type="Rhea" id="RHEA:22636"/>
        <dbReference type="ChEBI" id="CHEBI:15377"/>
        <dbReference type="ChEBI" id="CHEBI:15378"/>
        <dbReference type="ChEBI" id="CHEBI:33019"/>
        <dbReference type="ChEBI" id="CHEBI:57566"/>
        <dbReference type="ChEBI" id="CHEBI:61481"/>
        <dbReference type="EC" id="3.6.1.9"/>
    </reaction>
</comment>
<comment type="catalytic activity">
    <reaction evidence="1">
        <text>dCTP + H2O = dCMP + diphosphate + H(+)</text>
        <dbReference type="Rhea" id="RHEA:22636"/>
        <dbReference type="ChEBI" id="CHEBI:15377"/>
        <dbReference type="ChEBI" id="CHEBI:15378"/>
        <dbReference type="ChEBI" id="CHEBI:33019"/>
        <dbReference type="ChEBI" id="CHEBI:57566"/>
        <dbReference type="ChEBI" id="CHEBI:61481"/>
        <dbReference type="EC" id="3.6.1.12"/>
    </reaction>
</comment>
<comment type="cofactor">
    <cofactor evidence="1">
        <name>Mg(2+)</name>
        <dbReference type="ChEBI" id="CHEBI:18420"/>
    </cofactor>
</comment>
<comment type="subunit">
    <text evidence="1">Monomer.</text>
</comment>
<comment type="similarity">
    <text evidence="1">Belongs to the Nudix hydrolase family. NudI subfamily.</text>
</comment>
<proteinExistence type="inferred from homology"/>
<keyword id="KW-0378">Hydrolase</keyword>
<keyword id="KW-0460">Magnesium</keyword>
<keyword id="KW-1185">Reference proteome</keyword>
<reference key="1">
    <citation type="journal article" date="2009" name="J. Bacteriol.">
        <title>Complete genome sequence and comparative genome analysis of enteropathogenic Escherichia coli O127:H6 strain E2348/69.</title>
        <authorList>
            <person name="Iguchi A."/>
            <person name="Thomson N.R."/>
            <person name="Ogura Y."/>
            <person name="Saunders D."/>
            <person name="Ooka T."/>
            <person name="Henderson I.R."/>
            <person name="Harris D."/>
            <person name="Asadulghani M."/>
            <person name="Kurokawa K."/>
            <person name="Dean P."/>
            <person name="Kenny B."/>
            <person name="Quail M.A."/>
            <person name="Thurston S."/>
            <person name="Dougan G."/>
            <person name="Hayashi T."/>
            <person name="Parkhill J."/>
            <person name="Frankel G."/>
        </authorList>
    </citation>
    <scope>NUCLEOTIDE SEQUENCE [LARGE SCALE GENOMIC DNA]</scope>
    <source>
        <strain>E2348/69 / EPEC</strain>
    </source>
</reference>
<name>NUDI_ECO27</name>
<feature type="chain" id="PRO_1000188476" description="Nucleoside triphosphatase NudI">
    <location>
        <begin position="1"/>
        <end position="141"/>
    </location>
</feature>
<feature type="domain" description="Nudix hydrolase" evidence="1">
    <location>
        <begin position="1"/>
        <end position="141"/>
    </location>
</feature>
<feature type="short sequence motif" description="Nudix box">
    <location>
        <begin position="38"/>
        <end position="59"/>
    </location>
</feature>
<organism>
    <name type="scientific">Escherichia coli O127:H6 (strain E2348/69 / EPEC)</name>
    <dbReference type="NCBI Taxonomy" id="574521"/>
    <lineage>
        <taxon>Bacteria</taxon>
        <taxon>Pseudomonadati</taxon>
        <taxon>Pseudomonadota</taxon>
        <taxon>Gammaproteobacteria</taxon>
        <taxon>Enterobacterales</taxon>
        <taxon>Enterobacteriaceae</taxon>
        <taxon>Escherichia</taxon>
    </lineage>
</organism>
<accession>B7UFR3</accession>